<keyword id="KW-0414">Isoprene biosynthesis</keyword>
<keyword id="KW-0456">Lyase</keyword>
<keyword id="KW-0479">Metal-binding</keyword>
<organism>
    <name type="scientific">Vibrio campbellii (strain ATCC BAA-1116)</name>
    <dbReference type="NCBI Taxonomy" id="2902295"/>
    <lineage>
        <taxon>Bacteria</taxon>
        <taxon>Pseudomonadati</taxon>
        <taxon>Pseudomonadota</taxon>
        <taxon>Gammaproteobacteria</taxon>
        <taxon>Vibrionales</taxon>
        <taxon>Vibrionaceae</taxon>
        <taxon>Vibrio</taxon>
    </lineage>
</organism>
<gene>
    <name evidence="1" type="primary">ispF</name>
    <name type="ordered locus">VIBHAR_03522</name>
</gene>
<reference key="1">
    <citation type="submission" date="2007-08" db="EMBL/GenBank/DDBJ databases">
        <authorList>
            <consortium name="The Vibrio harveyi Genome Sequencing Project"/>
            <person name="Bassler B."/>
            <person name="Clifton S.W."/>
            <person name="Fulton L."/>
            <person name="Delehaunty K."/>
            <person name="Fronick C."/>
            <person name="Harrison M."/>
            <person name="Markivic C."/>
            <person name="Fulton R."/>
            <person name="Tin-Wollam A.-M."/>
            <person name="Shah N."/>
            <person name="Pepin K."/>
            <person name="Nash W."/>
            <person name="Thiruvilangam P."/>
            <person name="Bhonagiri V."/>
            <person name="Waters C."/>
            <person name="Tu K.C."/>
            <person name="Irgon J."/>
            <person name="Wilson R.K."/>
        </authorList>
    </citation>
    <scope>NUCLEOTIDE SEQUENCE [LARGE SCALE GENOMIC DNA]</scope>
    <source>
        <strain>ATCC BAA-1116 / BB120</strain>
    </source>
</reference>
<comment type="function">
    <text evidence="1">Involved in the biosynthesis of isopentenyl diphosphate (IPP) and dimethylallyl diphosphate (DMAPP), two major building blocks of isoprenoid compounds. Catalyzes the conversion of 4-diphosphocytidyl-2-C-methyl-D-erythritol 2-phosphate (CDP-ME2P) to 2-C-methyl-D-erythritol 2,4-cyclodiphosphate (ME-CPP) with a corresponding release of cytidine 5-monophosphate (CMP).</text>
</comment>
<comment type="catalytic activity">
    <reaction evidence="1">
        <text>4-CDP-2-C-methyl-D-erythritol 2-phosphate = 2-C-methyl-D-erythritol 2,4-cyclic diphosphate + CMP</text>
        <dbReference type="Rhea" id="RHEA:23864"/>
        <dbReference type="ChEBI" id="CHEBI:57919"/>
        <dbReference type="ChEBI" id="CHEBI:58483"/>
        <dbReference type="ChEBI" id="CHEBI:60377"/>
        <dbReference type="EC" id="4.6.1.12"/>
    </reaction>
</comment>
<comment type="cofactor">
    <cofactor evidence="1">
        <name>a divalent metal cation</name>
        <dbReference type="ChEBI" id="CHEBI:60240"/>
    </cofactor>
    <text evidence="1">Binds 1 divalent metal cation per subunit.</text>
</comment>
<comment type="pathway">
    <text evidence="1">Isoprenoid biosynthesis; isopentenyl diphosphate biosynthesis via DXP pathway; isopentenyl diphosphate from 1-deoxy-D-xylulose 5-phosphate: step 4/6.</text>
</comment>
<comment type="subunit">
    <text evidence="1">Homotrimer.</text>
</comment>
<comment type="similarity">
    <text evidence="1">Belongs to the IspF family.</text>
</comment>
<accession>A7MTS5</accession>
<protein>
    <recommendedName>
        <fullName evidence="1">2-C-methyl-D-erythritol 2,4-cyclodiphosphate synthase</fullName>
        <shortName evidence="1">MECDP-synthase</shortName>
        <shortName evidence="1">MECPP-synthase</shortName>
        <shortName evidence="1">MECPS</shortName>
        <ecNumber evidence="1">4.6.1.12</ecNumber>
    </recommendedName>
</protein>
<evidence type="ECO:0000255" key="1">
    <source>
        <dbReference type="HAMAP-Rule" id="MF_00107"/>
    </source>
</evidence>
<name>ISPF_VIBC1</name>
<sequence>MIRIGHGFDVHKFGGEGPVIIGGVAIPYEQGLIAHSDGDVALHALTDALLGAIAAGDIGRHFPDTDDKWKGADSRELLKDVYRRVKEQGYRLGNADVTIMAQAPKMAPHIDAMCAAIAEDLETDISNINVKATTTERLGFTGRKEGIATEAVVLLFKQ</sequence>
<dbReference type="EC" id="4.6.1.12" evidence="1"/>
<dbReference type="EMBL" id="CP000789">
    <property type="protein sequence ID" value="ABU72458.1"/>
    <property type="molecule type" value="Genomic_DNA"/>
</dbReference>
<dbReference type="RefSeq" id="WP_005425365.1">
    <property type="nucleotide sequence ID" value="NC_022269.1"/>
</dbReference>
<dbReference type="SMR" id="A7MTS5"/>
<dbReference type="GeneID" id="67376270"/>
<dbReference type="KEGG" id="vha:VIBHAR_03522"/>
<dbReference type="PATRIC" id="fig|338187.25.peg.2688"/>
<dbReference type="UniPathway" id="UPA00056">
    <property type="reaction ID" value="UER00095"/>
</dbReference>
<dbReference type="Proteomes" id="UP000008152">
    <property type="component" value="Chromosome I"/>
</dbReference>
<dbReference type="GO" id="GO:0008685">
    <property type="term" value="F:2-C-methyl-D-erythritol 2,4-cyclodiphosphate synthase activity"/>
    <property type="evidence" value="ECO:0007669"/>
    <property type="project" value="UniProtKB-UniRule"/>
</dbReference>
<dbReference type="GO" id="GO:0046872">
    <property type="term" value="F:metal ion binding"/>
    <property type="evidence" value="ECO:0007669"/>
    <property type="project" value="UniProtKB-KW"/>
</dbReference>
<dbReference type="GO" id="GO:0019288">
    <property type="term" value="P:isopentenyl diphosphate biosynthetic process, methylerythritol 4-phosphate pathway"/>
    <property type="evidence" value="ECO:0007669"/>
    <property type="project" value="UniProtKB-UniRule"/>
</dbReference>
<dbReference type="GO" id="GO:0016114">
    <property type="term" value="P:terpenoid biosynthetic process"/>
    <property type="evidence" value="ECO:0007669"/>
    <property type="project" value="InterPro"/>
</dbReference>
<dbReference type="CDD" id="cd00554">
    <property type="entry name" value="MECDP_synthase"/>
    <property type="match status" value="1"/>
</dbReference>
<dbReference type="FunFam" id="3.30.1330.50:FF:000001">
    <property type="entry name" value="2-C-methyl-D-erythritol 2,4-cyclodiphosphate synthase"/>
    <property type="match status" value="1"/>
</dbReference>
<dbReference type="Gene3D" id="3.30.1330.50">
    <property type="entry name" value="2-C-methyl-D-erythritol 2,4-cyclodiphosphate synthase"/>
    <property type="match status" value="1"/>
</dbReference>
<dbReference type="HAMAP" id="MF_00107">
    <property type="entry name" value="IspF"/>
    <property type="match status" value="1"/>
</dbReference>
<dbReference type="InterPro" id="IPR003526">
    <property type="entry name" value="MECDP_synthase"/>
</dbReference>
<dbReference type="InterPro" id="IPR020555">
    <property type="entry name" value="MECDP_synthase_CS"/>
</dbReference>
<dbReference type="InterPro" id="IPR036571">
    <property type="entry name" value="MECDP_synthase_sf"/>
</dbReference>
<dbReference type="NCBIfam" id="TIGR00151">
    <property type="entry name" value="ispF"/>
    <property type="match status" value="1"/>
</dbReference>
<dbReference type="PANTHER" id="PTHR43181">
    <property type="entry name" value="2-C-METHYL-D-ERYTHRITOL 2,4-CYCLODIPHOSPHATE SYNTHASE, CHLOROPLASTIC"/>
    <property type="match status" value="1"/>
</dbReference>
<dbReference type="PANTHER" id="PTHR43181:SF1">
    <property type="entry name" value="2-C-METHYL-D-ERYTHRITOL 2,4-CYCLODIPHOSPHATE SYNTHASE, CHLOROPLASTIC"/>
    <property type="match status" value="1"/>
</dbReference>
<dbReference type="Pfam" id="PF02542">
    <property type="entry name" value="YgbB"/>
    <property type="match status" value="1"/>
</dbReference>
<dbReference type="SUPFAM" id="SSF69765">
    <property type="entry name" value="IpsF-like"/>
    <property type="match status" value="1"/>
</dbReference>
<dbReference type="PROSITE" id="PS01350">
    <property type="entry name" value="ISPF"/>
    <property type="match status" value="1"/>
</dbReference>
<proteinExistence type="inferred from homology"/>
<feature type="chain" id="PRO_1000022891" description="2-C-methyl-D-erythritol 2,4-cyclodiphosphate synthase">
    <location>
        <begin position="1"/>
        <end position="158"/>
    </location>
</feature>
<feature type="binding site" evidence="1">
    <location>
        <begin position="9"/>
        <end position="11"/>
    </location>
    <ligand>
        <name>4-CDP-2-C-methyl-D-erythritol 2-phosphate</name>
        <dbReference type="ChEBI" id="CHEBI:57919"/>
    </ligand>
</feature>
<feature type="binding site" evidence="1">
    <location>
        <position position="9"/>
    </location>
    <ligand>
        <name>a divalent metal cation</name>
        <dbReference type="ChEBI" id="CHEBI:60240"/>
    </ligand>
</feature>
<feature type="binding site" evidence="1">
    <location>
        <position position="11"/>
    </location>
    <ligand>
        <name>a divalent metal cation</name>
        <dbReference type="ChEBI" id="CHEBI:60240"/>
    </ligand>
</feature>
<feature type="binding site" evidence="1">
    <location>
        <begin position="35"/>
        <end position="36"/>
    </location>
    <ligand>
        <name>4-CDP-2-C-methyl-D-erythritol 2-phosphate</name>
        <dbReference type="ChEBI" id="CHEBI:57919"/>
    </ligand>
</feature>
<feature type="binding site" evidence="1">
    <location>
        <position position="43"/>
    </location>
    <ligand>
        <name>a divalent metal cation</name>
        <dbReference type="ChEBI" id="CHEBI:60240"/>
    </ligand>
</feature>
<feature type="binding site" evidence="1">
    <location>
        <begin position="57"/>
        <end position="59"/>
    </location>
    <ligand>
        <name>4-CDP-2-C-methyl-D-erythritol 2-phosphate</name>
        <dbReference type="ChEBI" id="CHEBI:57919"/>
    </ligand>
</feature>
<feature type="binding site" evidence="1">
    <location>
        <begin position="62"/>
        <end position="66"/>
    </location>
    <ligand>
        <name>4-CDP-2-C-methyl-D-erythritol 2-phosphate</name>
        <dbReference type="ChEBI" id="CHEBI:57919"/>
    </ligand>
</feature>
<feature type="binding site" evidence="1">
    <location>
        <begin position="101"/>
        <end position="107"/>
    </location>
    <ligand>
        <name>4-CDP-2-C-methyl-D-erythritol 2-phosphate</name>
        <dbReference type="ChEBI" id="CHEBI:57919"/>
    </ligand>
</feature>
<feature type="binding site" evidence="1">
    <location>
        <begin position="133"/>
        <end position="136"/>
    </location>
    <ligand>
        <name>4-CDP-2-C-methyl-D-erythritol 2-phosphate</name>
        <dbReference type="ChEBI" id="CHEBI:57919"/>
    </ligand>
</feature>
<feature type="binding site" evidence="1">
    <location>
        <position position="140"/>
    </location>
    <ligand>
        <name>4-CDP-2-C-methyl-D-erythritol 2-phosphate</name>
        <dbReference type="ChEBI" id="CHEBI:57919"/>
    </ligand>
</feature>
<feature type="binding site" evidence="1">
    <location>
        <position position="143"/>
    </location>
    <ligand>
        <name>4-CDP-2-C-methyl-D-erythritol 2-phosphate</name>
        <dbReference type="ChEBI" id="CHEBI:57919"/>
    </ligand>
</feature>
<feature type="site" description="Transition state stabilizer" evidence="1">
    <location>
        <position position="35"/>
    </location>
</feature>
<feature type="site" description="Transition state stabilizer" evidence="1">
    <location>
        <position position="134"/>
    </location>
</feature>